<reference key="1">
    <citation type="journal article" date="1998" name="Science">
        <title>Genome sequence of the nematode C. elegans: a platform for investigating biology.</title>
        <authorList>
            <consortium name="The C. elegans sequencing consortium"/>
        </authorList>
    </citation>
    <scope>NUCLEOTIDE SEQUENCE [LARGE SCALE GENOMIC DNA]</scope>
    <source>
        <strain>Bristol N2</strain>
    </source>
</reference>
<keyword id="KW-0143">Chaperone</keyword>
<keyword id="KW-0156">Chromatin regulator</keyword>
<keyword id="KW-0539">Nucleus</keyword>
<keyword id="KW-1185">Reference proteome</keyword>
<keyword id="KW-0804">Transcription</keyword>
<keyword id="KW-0805">Transcription regulation</keyword>
<protein>
    <recommendedName>
        <fullName>Probable histone chaperone asf-1-like protein</fullName>
    </recommendedName>
    <alternativeName>
        <fullName>Anti-silencing function protein 1-like</fullName>
    </alternativeName>
</protein>
<feature type="chain" id="PRO_0000284024" description="Probable histone chaperone asf-1-like protein">
    <location>
        <begin position="1"/>
        <end position="245"/>
    </location>
</feature>
<feature type="region of interest" description="Disordered" evidence="2">
    <location>
        <begin position="157"/>
        <end position="245"/>
    </location>
</feature>
<feature type="compositionally biased region" description="Acidic residues" evidence="2">
    <location>
        <begin position="157"/>
        <end position="166"/>
    </location>
</feature>
<feature type="compositionally biased region" description="Basic and acidic residues" evidence="2">
    <location>
        <begin position="167"/>
        <end position="183"/>
    </location>
</feature>
<feature type="compositionally biased region" description="Acidic residues" evidence="2">
    <location>
        <begin position="184"/>
        <end position="206"/>
    </location>
</feature>
<feature type="compositionally biased region" description="Basic and acidic residues" evidence="2">
    <location>
        <begin position="215"/>
        <end position="245"/>
    </location>
</feature>
<organism>
    <name type="scientific">Caenorhabditis elegans</name>
    <dbReference type="NCBI Taxonomy" id="6239"/>
    <lineage>
        <taxon>Eukaryota</taxon>
        <taxon>Metazoa</taxon>
        <taxon>Ecdysozoa</taxon>
        <taxon>Nematoda</taxon>
        <taxon>Chromadorea</taxon>
        <taxon>Rhabditida</taxon>
        <taxon>Rhabditina</taxon>
        <taxon>Rhabditomorpha</taxon>
        <taxon>Rhabditoidea</taxon>
        <taxon>Rhabditidae</taxon>
        <taxon>Peloderinae</taxon>
        <taxon>Caenorhabditis</taxon>
    </lineage>
</organism>
<name>ASF1L_CAEEL</name>
<evidence type="ECO:0000250" key="1"/>
<evidence type="ECO:0000256" key="2">
    <source>
        <dbReference type="SAM" id="MobiDB-lite"/>
    </source>
</evidence>
<evidence type="ECO:0000305" key="3"/>
<gene>
    <name type="primary">asfl-1</name>
    <name type="ORF">C03D6.5</name>
</gene>
<sequence>MASRVNIVQVQILDNPAMFVDKFKMEITFEVFEHLPHDLEWELVYVGSGTSRDFDQVLDSALVGPIPEGRHKFVFDAEHPDISKIPVEDIVGVSVLLLRCKYNDQEFINMGWFVANEYTDEELKENPPAKPLIEKLSRKIETEDLRVTTFPIRWTDEDPVAEPVDEEANKVFDEDDLMPLHDDGQDDDEEEEDDDETGPNTEEVDLNESFNERMANAHDGTEQKNGEESMEHDGASGDVEMGDKH</sequence>
<proteinExistence type="inferred from homology"/>
<dbReference type="EMBL" id="Z75525">
    <property type="protein sequence ID" value="CAA99762.3"/>
    <property type="molecule type" value="Genomic_DNA"/>
</dbReference>
<dbReference type="PIR" id="T18882">
    <property type="entry name" value="T18882"/>
</dbReference>
<dbReference type="RefSeq" id="NP_492567.3">
    <property type="nucleotide sequence ID" value="NM_060166.5"/>
</dbReference>
<dbReference type="SMR" id="Q17603"/>
<dbReference type="BioGRID" id="38236">
    <property type="interactions" value="5"/>
</dbReference>
<dbReference type="FunCoup" id="Q17603">
    <property type="interactions" value="2513"/>
</dbReference>
<dbReference type="STRING" id="6239.C03D6.5.1"/>
<dbReference type="PaxDb" id="6239-C03D6.5"/>
<dbReference type="PeptideAtlas" id="Q17603"/>
<dbReference type="EnsemblMetazoa" id="C03D6.5.1">
    <property type="protein sequence ID" value="C03D6.5.1"/>
    <property type="gene ID" value="WBGene00007277"/>
</dbReference>
<dbReference type="GeneID" id="172812"/>
<dbReference type="KEGG" id="cel:CELE_C03D6.5"/>
<dbReference type="AGR" id="WB:WBGene00007277"/>
<dbReference type="CTD" id="172812"/>
<dbReference type="WormBase" id="C03D6.5">
    <property type="protein sequence ID" value="CE36095"/>
    <property type="gene ID" value="WBGene00007277"/>
    <property type="gene designation" value="asfl-1"/>
</dbReference>
<dbReference type="eggNOG" id="KOG3265">
    <property type="taxonomic scope" value="Eukaryota"/>
</dbReference>
<dbReference type="GeneTree" id="ENSGT00390000004692"/>
<dbReference type="HOGENOM" id="CLU_060354_0_1_1"/>
<dbReference type="InParanoid" id="Q17603"/>
<dbReference type="OMA" id="DYADQEM"/>
<dbReference type="OrthoDB" id="29755at2759"/>
<dbReference type="PhylomeDB" id="Q17603"/>
<dbReference type="PRO" id="PR:Q17603"/>
<dbReference type="Proteomes" id="UP000001940">
    <property type="component" value="Chromosome I"/>
</dbReference>
<dbReference type="Bgee" id="WBGene00007277">
    <property type="expression patterns" value="Expressed in adult organism and 2 other cell types or tissues"/>
</dbReference>
<dbReference type="GO" id="GO:0000785">
    <property type="term" value="C:chromatin"/>
    <property type="evidence" value="ECO:0000318"/>
    <property type="project" value="GO_Central"/>
</dbReference>
<dbReference type="GO" id="GO:0005634">
    <property type="term" value="C:nucleus"/>
    <property type="evidence" value="ECO:0000318"/>
    <property type="project" value="GO_Central"/>
</dbReference>
<dbReference type="GO" id="GO:0042393">
    <property type="term" value="F:histone binding"/>
    <property type="evidence" value="ECO:0000318"/>
    <property type="project" value="GO_Central"/>
</dbReference>
<dbReference type="GO" id="GO:0006260">
    <property type="term" value="P:DNA replication"/>
    <property type="evidence" value="ECO:0000315"/>
    <property type="project" value="UniProtKB"/>
</dbReference>
<dbReference type="GO" id="GO:0006335">
    <property type="term" value="P:DNA replication-dependent chromatin assembly"/>
    <property type="evidence" value="ECO:0000318"/>
    <property type="project" value="GO_Central"/>
</dbReference>
<dbReference type="GO" id="GO:0006334">
    <property type="term" value="P:nucleosome assembly"/>
    <property type="evidence" value="ECO:0007669"/>
    <property type="project" value="InterPro"/>
</dbReference>
<dbReference type="GO" id="GO:0006337">
    <property type="term" value="P:nucleosome disassembly"/>
    <property type="evidence" value="ECO:0007669"/>
    <property type="project" value="InterPro"/>
</dbReference>
<dbReference type="GO" id="GO:0048477">
    <property type="term" value="P:oogenesis"/>
    <property type="evidence" value="ECO:0000315"/>
    <property type="project" value="UniProtKB"/>
</dbReference>
<dbReference type="GO" id="GO:0060378">
    <property type="term" value="P:regulation of brood size"/>
    <property type="evidence" value="ECO:0000315"/>
    <property type="project" value="UniProtKB"/>
</dbReference>
<dbReference type="GO" id="GO:0007283">
    <property type="term" value="P:spermatogenesis"/>
    <property type="evidence" value="ECO:0000315"/>
    <property type="project" value="UniProtKB"/>
</dbReference>
<dbReference type="FunFam" id="2.60.40.1490:FF:000001">
    <property type="entry name" value="Histone chaperone ASF1"/>
    <property type="match status" value="1"/>
</dbReference>
<dbReference type="Gene3D" id="2.60.40.1490">
    <property type="entry name" value="Histone chaperone ASF1-like"/>
    <property type="match status" value="1"/>
</dbReference>
<dbReference type="InterPro" id="IPR006818">
    <property type="entry name" value="ASF1-like"/>
</dbReference>
<dbReference type="InterPro" id="IPR036747">
    <property type="entry name" value="ASF1-like_sf"/>
</dbReference>
<dbReference type="InterPro" id="IPR017282">
    <property type="entry name" value="Hist_deposition_Asf1"/>
</dbReference>
<dbReference type="PANTHER" id="PTHR12040">
    <property type="entry name" value="ANTI-SILENCING PROTEIN 1"/>
    <property type="match status" value="1"/>
</dbReference>
<dbReference type="PANTHER" id="PTHR12040:SF0">
    <property type="entry name" value="HISTONE CHAPERONE ASF1"/>
    <property type="match status" value="1"/>
</dbReference>
<dbReference type="Pfam" id="PF04729">
    <property type="entry name" value="ASF1_hist_chap"/>
    <property type="match status" value="1"/>
</dbReference>
<dbReference type="PIRSF" id="PIRSF037759">
    <property type="entry name" value="Histone_Asf1"/>
    <property type="match status" value="1"/>
</dbReference>
<dbReference type="SUPFAM" id="SSF101546">
    <property type="entry name" value="ASF1-like"/>
    <property type="match status" value="1"/>
</dbReference>
<accession>Q17603</accession>
<comment type="function">
    <text evidence="1">Histone chaperone that facilitates histone deposition and histone exchange and removal during nucleosome assembly and disassembly.</text>
</comment>
<comment type="subunit">
    <text evidence="1">Interacts with histone H3 and histone H4.</text>
</comment>
<comment type="subcellular location">
    <subcellularLocation>
        <location evidence="1">Nucleus</location>
    </subcellularLocation>
</comment>
<comment type="similarity">
    <text evidence="3">Belongs to the ASF1 family.</text>
</comment>